<comment type="function">
    <text evidence="1">One of the primary rRNA binding proteins, it binds directly to 16S rRNA central domain where it helps coordinate assembly of the platform of the 30S subunit.</text>
</comment>
<comment type="subunit">
    <text evidence="1">Part of the 30S ribosomal subunit. Contacts proteins S5 and S12.</text>
</comment>
<comment type="similarity">
    <text evidence="1">Belongs to the universal ribosomal protein uS8 family.</text>
</comment>
<sequence>MSMQDPISDMLTRVRNGQAANKVAVKMPSSKLKVAIAALLKAEGYIVDFAVDSEAKPELEVTLKYFQAKPVIEQIKRVSRPGLRVYKNKDSLPTVMGGLGIAVVSTSKGLMSDRAARKAGLGGEIICYVA</sequence>
<protein>
    <recommendedName>
        <fullName evidence="1">Small ribosomal subunit protein uS8</fullName>
    </recommendedName>
    <alternativeName>
        <fullName evidence="2">30S ribosomal protein S8</fullName>
    </alternativeName>
</protein>
<evidence type="ECO:0000255" key="1">
    <source>
        <dbReference type="HAMAP-Rule" id="MF_01302"/>
    </source>
</evidence>
<evidence type="ECO:0000305" key="2"/>
<accession>B7VLE3</accession>
<dbReference type="EMBL" id="FM954972">
    <property type="protein sequence ID" value="CAV20109.1"/>
    <property type="molecule type" value="Genomic_DNA"/>
</dbReference>
<dbReference type="SMR" id="B7VLE3"/>
<dbReference type="STRING" id="575788.VS_2817"/>
<dbReference type="KEGG" id="vsp:VS_2817"/>
<dbReference type="eggNOG" id="COG0096">
    <property type="taxonomic scope" value="Bacteria"/>
</dbReference>
<dbReference type="HOGENOM" id="CLU_098428_0_0_6"/>
<dbReference type="Proteomes" id="UP000009100">
    <property type="component" value="Chromosome 1"/>
</dbReference>
<dbReference type="GO" id="GO:1990904">
    <property type="term" value="C:ribonucleoprotein complex"/>
    <property type="evidence" value="ECO:0007669"/>
    <property type="project" value="UniProtKB-KW"/>
</dbReference>
<dbReference type="GO" id="GO:0005840">
    <property type="term" value="C:ribosome"/>
    <property type="evidence" value="ECO:0007669"/>
    <property type="project" value="UniProtKB-KW"/>
</dbReference>
<dbReference type="GO" id="GO:0019843">
    <property type="term" value="F:rRNA binding"/>
    <property type="evidence" value="ECO:0007669"/>
    <property type="project" value="UniProtKB-UniRule"/>
</dbReference>
<dbReference type="GO" id="GO:0003735">
    <property type="term" value="F:structural constituent of ribosome"/>
    <property type="evidence" value="ECO:0007669"/>
    <property type="project" value="InterPro"/>
</dbReference>
<dbReference type="GO" id="GO:0006412">
    <property type="term" value="P:translation"/>
    <property type="evidence" value="ECO:0007669"/>
    <property type="project" value="UniProtKB-UniRule"/>
</dbReference>
<dbReference type="FunFam" id="3.30.1370.30:FF:000003">
    <property type="entry name" value="30S ribosomal protein S8"/>
    <property type="match status" value="1"/>
</dbReference>
<dbReference type="FunFam" id="3.30.1490.10:FF:000001">
    <property type="entry name" value="30S ribosomal protein S8"/>
    <property type="match status" value="1"/>
</dbReference>
<dbReference type="Gene3D" id="3.30.1370.30">
    <property type="match status" value="1"/>
</dbReference>
<dbReference type="Gene3D" id="3.30.1490.10">
    <property type="match status" value="1"/>
</dbReference>
<dbReference type="HAMAP" id="MF_01302_B">
    <property type="entry name" value="Ribosomal_uS8_B"/>
    <property type="match status" value="1"/>
</dbReference>
<dbReference type="InterPro" id="IPR000630">
    <property type="entry name" value="Ribosomal_uS8"/>
</dbReference>
<dbReference type="InterPro" id="IPR047863">
    <property type="entry name" value="Ribosomal_uS8_CS"/>
</dbReference>
<dbReference type="InterPro" id="IPR035987">
    <property type="entry name" value="Ribosomal_uS8_sf"/>
</dbReference>
<dbReference type="NCBIfam" id="NF001109">
    <property type="entry name" value="PRK00136.1"/>
    <property type="match status" value="1"/>
</dbReference>
<dbReference type="PANTHER" id="PTHR11758">
    <property type="entry name" value="40S RIBOSOMAL PROTEIN S15A"/>
    <property type="match status" value="1"/>
</dbReference>
<dbReference type="Pfam" id="PF00410">
    <property type="entry name" value="Ribosomal_S8"/>
    <property type="match status" value="1"/>
</dbReference>
<dbReference type="SUPFAM" id="SSF56047">
    <property type="entry name" value="Ribosomal protein S8"/>
    <property type="match status" value="1"/>
</dbReference>
<dbReference type="PROSITE" id="PS00053">
    <property type="entry name" value="RIBOSOMAL_S8"/>
    <property type="match status" value="1"/>
</dbReference>
<keyword id="KW-0687">Ribonucleoprotein</keyword>
<keyword id="KW-0689">Ribosomal protein</keyword>
<keyword id="KW-0694">RNA-binding</keyword>
<keyword id="KW-0699">rRNA-binding</keyword>
<feature type="chain" id="PRO_1000165361" description="Small ribosomal subunit protein uS8">
    <location>
        <begin position="1"/>
        <end position="130"/>
    </location>
</feature>
<proteinExistence type="inferred from homology"/>
<name>RS8_VIBA3</name>
<organism>
    <name type="scientific">Vibrio atlanticus (strain LGP32)</name>
    <name type="common">Vibrio splendidus (strain Mel32)</name>
    <dbReference type="NCBI Taxonomy" id="575788"/>
    <lineage>
        <taxon>Bacteria</taxon>
        <taxon>Pseudomonadati</taxon>
        <taxon>Pseudomonadota</taxon>
        <taxon>Gammaproteobacteria</taxon>
        <taxon>Vibrionales</taxon>
        <taxon>Vibrionaceae</taxon>
        <taxon>Vibrio</taxon>
    </lineage>
</organism>
<gene>
    <name evidence="1" type="primary">rpsH</name>
    <name type="ordered locus">VS_2817</name>
</gene>
<reference key="1">
    <citation type="submission" date="2009-02" db="EMBL/GenBank/DDBJ databases">
        <title>Vibrio splendidus str. LGP32 complete genome.</title>
        <authorList>
            <person name="Mazel D."/>
            <person name="Le Roux F."/>
        </authorList>
    </citation>
    <scope>NUCLEOTIDE SEQUENCE [LARGE SCALE GENOMIC DNA]</scope>
    <source>
        <strain>LGP32</strain>
    </source>
</reference>